<keyword id="KW-0067">ATP-binding</keyword>
<keyword id="KW-0963">Cytoplasm</keyword>
<keyword id="KW-0227">DNA damage</keyword>
<keyword id="KW-0228">DNA excision</keyword>
<keyword id="KW-0234">DNA repair</keyword>
<keyword id="KW-0238">DNA-binding</keyword>
<keyword id="KW-0267">Excision nuclease</keyword>
<keyword id="KW-0479">Metal-binding</keyword>
<keyword id="KW-0547">Nucleotide-binding</keyword>
<keyword id="KW-1185">Reference proteome</keyword>
<keyword id="KW-0677">Repeat</keyword>
<keyword id="KW-0742">SOS response</keyword>
<keyword id="KW-0862">Zinc</keyword>
<keyword id="KW-0863">Zinc-finger</keyword>
<evidence type="ECO:0000255" key="1">
    <source>
        <dbReference type="HAMAP-Rule" id="MF_00205"/>
    </source>
</evidence>
<name>UVRA_AGRFC</name>
<accession>Q8UF86</accession>
<proteinExistence type="inferred from homology"/>
<comment type="function">
    <text evidence="1">The UvrABC repair system catalyzes the recognition and processing of DNA lesions. UvrA is an ATPase and a DNA-binding protein. A damage recognition complex composed of 2 UvrA and 2 UvrB subunits scans DNA for abnormalities. When the presence of a lesion has been verified by UvrB, the UvrA molecules dissociate.</text>
</comment>
<comment type="subunit">
    <text evidence="1">Forms a heterotetramer with UvrB during the search for lesions.</text>
</comment>
<comment type="subcellular location">
    <subcellularLocation>
        <location evidence="1">Cytoplasm</location>
    </subcellularLocation>
</comment>
<comment type="similarity">
    <text evidence="1">Belongs to the ABC transporter superfamily. UvrA family.</text>
</comment>
<feature type="chain" id="PRO_0000093032" description="UvrABC system protein A">
    <location>
        <begin position="1"/>
        <end position="973"/>
    </location>
</feature>
<feature type="domain" description="ABC transporter 1" evidence="1">
    <location>
        <begin position="331"/>
        <end position="609"/>
    </location>
</feature>
<feature type="domain" description="ABC transporter 2" evidence="1">
    <location>
        <begin position="629"/>
        <end position="958"/>
    </location>
</feature>
<feature type="zinc finger region" description="C4-type" evidence="1">
    <location>
        <begin position="761"/>
        <end position="787"/>
    </location>
</feature>
<feature type="binding site" evidence="1">
    <location>
        <begin position="34"/>
        <end position="41"/>
    </location>
    <ligand>
        <name>ATP</name>
        <dbReference type="ChEBI" id="CHEBI:30616"/>
    </ligand>
</feature>
<feature type="binding site" evidence="1">
    <location>
        <begin position="662"/>
        <end position="669"/>
    </location>
    <ligand>
        <name>ATP</name>
        <dbReference type="ChEBI" id="CHEBI:30616"/>
    </ligand>
</feature>
<gene>
    <name evidence="1" type="primary">uvrA</name>
    <name type="ordered locus">Atu1513</name>
    <name type="ORF">AGR_C_2790</name>
</gene>
<dbReference type="EMBL" id="AE007869">
    <property type="protein sequence ID" value="AAK87304.2"/>
    <property type="molecule type" value="Genomic_DNA"/>
</dbReference>
<dbReference type="PIR" id="AH2762">
    <property type="entry name" value="AH2762"/>
</dbReference>
<dbReference type="PIR" id="G97543">
    <property type="entry name" value="G97543"/>
</dbReference>
<dbReference type="RefSeq" id="NP_354519.2">
    <property type="nucleotide sequence ID" value="NC_003062.2"/>
</dbReference>
<dbReference type="RefSeq" id="WP_010971680.1">
    <property type="nucleotide sequence ID" value="NC_003062.2"/>
</dbReference>
<dbReference type="SMR" id="Q8UF86"/>
<dbReference type="STRING" id="176299.Atu1513"/>
<dbReference type="EnsemblBacteria" id="AAK87304">
    <property type="protein sequence ID" value="AAK87304"/>
    <property type="gene ID" value="Atu1513"/>
</dbReference>
<dbReference type="GeneID" id="1133551"/>
<dbReference type="KEGG" id="atu:Atu1513"/>
<dbReference type="PATRIC" id="fig|176299.10.peg.1539"/>
<dbReference type="eggNOG" id="COG0178">
    <property type="taxonomic scope" value="Bacteria"/>
</dbReference>
<dbReference type="HOGENOM" id="CLU_001370_2_1_5"/>
<dbReference type="OrthoDB" id="9809851at2"/>
<dbReference type="PhylomeDB" id="Q8UF86"/>
<dbReference type="BioCyc" id="AGRO:ATU1513-MONOMER"/>
<dbReference type="Proteomes" id="UP000000813">
    <property type="component" value="Chromosome circular"/>
</dbReference>
<dbReference type="GO" id="GO:0005737">
    <property type="term" value="C:cytoplasm"/>
    <property type="evidence" value="ECO:0007669"/>
    <property type="project" value="UniProtKB-SubCell"/>
</dbReference>
<dbReference type="GO" id="GO:0009380">
    <property type="term" value="C:excinuclease repair complex"/>
    <property type="evidence" value="ECO:0007669"/>
    <property type="project" value="InterPro"/>
</dbReference>
<dbReference type="GO" id="GO:0005524">
    <property type="term" value="F:ATP binding"/>
    <property type="evidence" value="ECO:0007669"/>
    <property type="project" value="UniProtKB-UniRule"/>
</dbReference>
<dbReference type="GO" id="GO:0016887">
    <property type="term" value="F:ATP hydrolysis activity"/>
    <property type="evidence" value="ECO:0007669"/>
    <property type="project" value="InterPro"/>
</dbReference>
<dbReference type="GO" id="GO:0003677">
    <property type="term" value="F:DNA binding"/>
    <property type="evidence" value="ECO:0007669"/>
    <property type="project" value="UniProtKB-UniRule"/>
</dbReference>
<dbReference type="GO" id="GO:0009381">
    <property type="term" value="F:excinuclease ABC activity"/>
    <property type="evidence" value="ECO:0007669"/>
    <property type="project" value="UniProtKB-UniRule"/>
</dbReference>
<dbReference type="GO" id="GO:0008270">
    <property type="term" value="F:zinc ion binding"/>
    <property type="evidence" value="ECO:0007669"/>
    <property type="project" value="UniProtKB-UniRule"/>
</dbReference>
<dbReference type="GO" id="GO:0006289">
    <property type="term" value="P:nucleotide-excision repair"/>
    <property type="evidence" value="ECO:0007669"/>
    <property type="project" value="UniProtKB-UniRule"/>
</dbReference>
<dbReference type="GO" id="GO:0009432">
    <property type="term" value="P:SOS response"/>
    <property type="evidence" value="ECO:0007669"/>
    <property type="project" value="UniProtKB-UniRule"/>
</dbReference>
<dbReference type="CDD" id="cd03270">
    <property type="entry name" value="ABC_UvrA_I"/>
    <property type="match status" value="1"/>
</dbReference>
<dbReference type="CDD" id="cd03271">
    <property type="entry name" value="ABC_UvrA_II"/>
    <property type="match status" value="1"/>
</dbReference>
<dbReference type="FunFam" id="1.20.1580.10:FF:000002">
    <property type="entry name" value="UvrABC system protein A"/>
    <property type="match status" value="1"/>
</dbReference>
<dbReference type="FunFam" id="3.40.50.300:FF:000028">
    <property type="entry name" value="UvrABC system protein A"/>
    <property type="match status" value="1"/>
</dbReference>
<dbReference type="Gene3D" id="1.10.8.280">
    <property type="entry name" value="ABC transporter ATPase domain-like"/>
    <property type="match status" value="1"/>
</dbReference>
<dbReference type="Gene3D" id="1.20.1580.10">
    <property type="entry name" value="ABC transporter ATPase like domain"/>
    <property type="match status" value="2"/>
</dbReference>
<dbReference type="Gene3D" id="3.30.1490.20">
    <property type="entry name" value="ATP-grasp fold, A domain"/>
    <property type="match status" value="1"/>
</dbReference>
<dbReference type="Gene3D" id="3.40.50.300">
    <property type="entry name" value="P-loop containing nucleotide triphosphate hydrolases"/>
    <property type="match status" value="2"/>
</dbReference>
<dbReference type="HAMAP" id="MF_00205">
    <property type="entry name" value="UvrA"/>
    <property type="match status" value="1"/>
</dbReference>
<dbReference type="InterPro" id="IPR003439">
    <property type="entry name" value="ABC_transporter-like_ATP-bd"/>
</dbReference>
<dbReference type="InterPro" id="IPR017871">
    <property type="entry name" value="ABC_transporter-like_CS"/>
</dbReference>
<dbReference type="InterPro" id="IPR013815">
    <property type="entry name" value="ATP_grasp_subdomain_1"/>
</dbReference>
<dbReference type="InterPro" id="IPR027417">
    <property type="entry name" value="P-loop_NTPase"/>
</dbReference>
<dbReference type="InterPro" id="IPR004602">
    <property type="entry name" value="UvrA"/>
</dbReference>
<dbReference type="InterPro" id="IPR041552">
    <property type="entry name" value="UvrA_DNA-bd"/>
</dbReference>
<dbReference type="InterPro" id="IPR041102">
    <property type="entry name" value="UvrA_inter"/>
</dbReference>
<dbReference type="NCBIfam" id="NF001503">
    <property type="entry name" value="PRK00349.1"/>
    <property type="match status" value="1"/>
</dbReference>
<dbReference type="NCBIfam" id="TIGR00630">
    <property type="entry name" value="uvra"/>
    <property type="match status" value="1"/>
</dbReference>
<dbReference type="PANTHER" id="PTHR43152">
    <property type="entry name" value="UVRABC SYSTEM PROTEIN A"/>
    <property type="match status" value="1"/>
</dbReference>
<dbReference type="PANTHER" id="PTHR43152:SF3">
    <property type="entry name" value="UVRABC SYSTEM PROTEIN A"/>
    <property type="match status" value="1"/>
</dbReference>
<dbReference type="Pfam" id="PF17755">
    <property type="entry name" value="UvrA_DNA-bind"/>
    <property type="match status" value="1"/>
</dbReference>
<dbReference type="Pfam" id="PF17760">
    <property type="entry name" value="UvrA_inter"/>
    <property type="match status" value="1"/>
</dbReference>
<dbReference type="SUPFAM" id="SSF52540">
    <property type="entry name" value="P-loop containing nucleoside triphosphate hydrolases"/>
    <property type="match status" value="2"/>
</dbReference>
<dbReference type="PROSITE" id="PS00211">
    <property type="entry name" value="ABC_TRANSPORTER_1"/>
    <property type="match status" value="2"/>
</dbReference>
<dbReference type="PROSITE" id="PS50893">
    <property type="entry name" value="ABC_TRANSPORTER_2"/>
    <property type="match status" value="1"/>
</dbReference>
<reference key="1">
    <citation type="journal article" date="2001" name="Science">
        <title>The genome of the natural genetic engineer Agrobacterium tumefaciens C58.</title>
        <authorList>
            <person name="Wood D.W."/>
            <person name="Setubal J.C."/>
            <person name="Kaul R."/>
            <person name="Monks D.E."/>
            <person name="Kitajima J.P."/>
            <person name="Okura V.K."/>
            <person name="Zhou Y."/>
            <person name="Chen L."/>
            <person name="Wood G.E."/>
            <person name="Almeida N.F. Jr."/>
            <person name="Woo L."/>
            <person name="Chen Y."/>
            <person name="Paulsen I.T."/>
            <person name="Eisen J.A."/>
            <person name="Karp P.D."/>
            <person name="Bovee D. Sr."/>
            <person name="Chapman P."/>
            <person name="Clendenning J."/>
            <person name="Deatherage G."/>
            <person name="Gillet W."/>
            <person name="Grant C."/>
            <person name="Kutyavin T."/>
            <person name="Levy R."/>
            <person name="Li M.-J."/>
            <person name="McClelland E."/>
            <person name="Palmieri A."/>
            <person name="Raymond C."/>
            <person name="Rouse G."/>
            <person name="Saenphimmachak C."/>
            <person name="Wu Z."/>
            <person name="Romero P."/>
            <person name="Gordon D."/>
            <person name="Zhang S."/>
            <person name="Yoo H."/>
            <person name="Tao Y."/>
            <person name="Biddle P."/>
            <person name="Jung M."/>
            <person name="Krespan W."/>
            <person name="Perry M."/>
            <person name="Gordon-Kamm B."/>
            <person name="Liao L."/>
            <person name="Kim S."/>
            <person name="Hendrick C."/>
            <person name="Zhao Z.-Y."/>
            <person name="Dolan M."/>
            <person name="Chumley F."/>
            <person name="Tingey S.V."/>
            <person name="Tomb J.-F."/>
            <person name="Gordon M.P."/>
            <person name="Olson M.V."/>
            <person name="Nester E.W."/>
        </authorList>
    </citation>
    <scope>NUCLEOTIDE SEQUENCE [LARGE SCALE GENOMIC DNA]</scope>
    <source>
        <strain>C58 / ATCC 33970</strain>
    </source>
</reference>
<reference key="2">
    <citation type="journal article" date="2001" name="Science">
        <title>Genome sequence of the plant pathogen and biotechnology agent Agrobacterium tumefaciens C58.</title>
        <authorList>
            <person name="Goodner B."/>
            <person name="Hinkle G."/>
            <person name="Gattung S."/>
            <person name="Miller N."/>
            <person name="Blanchard M."/>
            <person name="Qurollo B."/>
            <person name="Goldman B.S."/>
            <person name="Cao Y."/>
            <person name="Askenazi M."/>
            <person name="Halling C."/>
            <person name="Mullin L."/>
            <person name="Houmiel K."/>
            <person name="Gordon J."/>
            <person name="Vaudin M."/>
            <person name="Iartchouk O."/>
            <person name="Epp A."/>
            <person name="Liu F."/>
            <person name="Wollam C."/>
            <person name="Allinger M."/>
            <person name="Doughty D."/>
            <person name="Scott C."/>
            <person name="Lappas C."/>
            <person name="Markelz B."/>
            <person name="Flanagan C."/>
            <person name="Crowell C."/>
            <person name="Gurson J."/>
            <person name="Lomo C."/>
            <person name="Sear C."/>
            <person name="Strub G."/>
            <person name="Cielo C."/>
            <person name="Slater S."/>
        </authorList>
    </citation>
    <scope>NUCLEOTIDE SEQUENCE [LARGE SCALE GENOMIC DNA]</scope>
    <source>
        <strain>C58 / ATCC 33970</strain>
    </source>
</reference>
<organism>
    <name type="scientific">Agrobacterium fabrum (strain C58 / ATCC 33970)</name>
    <name type="common">Agrobacterium tumefaciens (strain C58)</name>
    <dbReference type="NCBI Taxonomy" id="176299"/>
    <lineage>
        <taxon>Bacteria</taxon>
        <taxon>Pseudomonadati</taxon>
        <taxon>Pseudomonadota</taxon>
        <taxon>Alphaproteobacteria</taxon>
        <taxon>Hyphomicrobiales</taxon>
        <taxon>Rhizobiaceae</taxon>
        <taxon>Rhizobium/Agrobacterium group</taxon>
        <taxon>Agrobacterium</taxon>
        <taxon>Agrobacterium tumefaciens complex</taxon>
    </lineage>
</organism>
<sequence>MSELKTISIRGAREHNLKGIDLDLPRNKLIVMTGLSGSGKSSLAFDTIYAEGQRRYVESLSAYARQFLEMMQKPDVDQIDGLSPAISIEQKTTSRNPRSTVGTVTEIYDYMRLLFARVGVPYSPATGLPIESQTVSQMVDRILAFEEGTRLYILAPIVRGRKGEYKKELAELMKKGFQRVKVDGQFYEIADVPALDKKYKHDIDVVVDRAVVRPDMAARLADSLETCLKLADGLAIAEFADKPLPPEDTAAGGSANKSLNETHERVLFSEKFACPVSGFTIPEIEPRLFSFNNPFGACPSCDGLGSQQKVDENLIVPEPARTLRDGAIAPWAKSSSPYYNQTLEALGKAFGFKLSSKWTDLSKEAQHAILQGTDDKIEFNYQDGARSYKTVKNFEGIVPNLERRWKETDSAWAREEIERYMSAAPCPACAGYRLKPEALAVKINKLHIGEVTQMSIRKARDWFEVLPENLNAKQNEIAVRILKEIRERLRFLNDVGLDYLSLSRNSGTLSGGESQRIRLASQIGSGLTGVLYVLDEPSIGLHQRDNARLLETLKHLRDIGNTVIVVEHDEDAILTADYVVDIGPAAGIHGGQVIAEGTPQDVMANPKSLTGKYLSGELGVAVPAERRKPKKGREIKVFGARGNNLQNVTAAVPLGVFTAVTGVSGGGKSTFLIETLYKSAARRVMGAREIPAEHDRIDGFEFIDKVIDIDQSPIGRTPRSNPATYTGAFTPIRDWFAGLPEAKARGYAPGRFSFNVKGGRCEACQGDGVIKIEMHFLPDVYVTCDVCHGKRYNRETLDVTFKGKSIADVLDMTVEEGVEFFAAVPAVRDKLQSLFDVGLGYIKVGQQANTLSGGEAQRVKLAKELSKRSTGRTLYILDEPTTGLHFHDVNKLLEMLHALVEQGNSVVVIEHNLEVIKTADWIIDIGPEGGTGGGEVVATGTPEDIVKVERSYTGHFLKELLDRRPAGKREAAE</sequence>
<protein>
    <recommendedName>
        <fullName evidence="1">UvrABC system protein A</fullName>
        <shortName evidence="1">UvrA protein</shortName>
    </recommendedName>
    <alternativeName>
        <fullName evidence="1">Excinuclease ABC subunit A</fullName>
    </alternativeName>
</protein>